<protein>
    <recommendedName>
        <fullName>Tryptophan biosynthesis protein TrpCF</fullName>
    </recommendedName>
    <domain>
        <recommendedName>
            <fullName>Indole-3-glycerol phosphate synthase</fullName>
            <shortName>IGPS</shortName>
            <ecNumber>4.1.1.48</ecNumber>
        </recommendedName>
    </domain>
    <domain>
        <recommendedName>
            <fullName>N-(5'-phospho-ribosyl)anthranilate isomerase</fullName>
            <shortName>PRAI</shortName>
            <ecNumber>5.3.1.24</ecNumber>
        </recommendedName>
    </domain>
</protein>
<feature type="chain" id="PRO_0000154275" description="Tryptophan biosynthesis protein TrpCF">
    <location>
        <begin position="1"/>
        <end position="461"/>
    </location>
</feature>
<feature type="region of interest" description="Indole-3-glycerol phosphate synthase">
    <location>
        <begin position="1"/>
        <end position="258"/>
    </location>
</feature>
<feature type="region of interest" description="N-(5'-phosphoribosyl)anthranilate isomerase">
    <location>
        <begin position="259"/>
        <end position="461"/>
    </location>
</feature>
<keyword id="KW-0028">Amino-acid biosynthesis</keyword>
<keyword id="KW-0057">Aromatic amino acid biosynthesis</keyword>
<keyword id="KW-0210">Decarboxylase</keyword>
<keyword id="KW-0413">Isomerase</keyword>
<keyword id="KW-0456">Lyase</keyword>
<keyword id="KW-0511">Multifunctional enzyme</keyword>
<keyword id="KW-0822">Tryptophan biosynthesis</keyword>
<proteinExistence type="inferred from homology"/>
<evidence type="ECO:0000250" key="1"/>
<evidence type="ECO:0000305" key="2"/>
<name>TRPC_BUCSC</name>
<comment type="function">
    <text evidence="1">Bifunctional enzyme that catalyzes two sequential steps of tryptophan biosynthetic pathway. The first reaction is catalyzed by the isomerase, coded by the TrpF domain; the second reaction is catalyzed by the synthase, coded by the TrpC domain (By similarity).</text>
</comment>
<comment type="catalytic activity">
    <reaction>
        <text>N-(5-phospho-beta-D-ribosyl)anthranilate = 1-(2-carboxyphenylamino)-1-deoxy-D-ribulose 5-phosphate</text>
        <dbReference type="Rhea" id="RHEA:21540"/>
        <dbReference type="ChEBI" id="CHEBI:18277"/>
        <dbReference type="ChEBI" id="CHEBI:58613"/>
        <dbReference type="EC" id="5.3.1.24"/>
    </reaction>
</comment>
<comment type="catalytic activity">
    <reaction>
        <text>1-(2-carboxyphenylamino)-1-deoxy-D-ribulose 5-phosphate + H(+) = (1S,2R)-1-C-(indol-3-yl)glycerol 3-phosphate + CO2 + H2O</text>
        <dbReference type="Rhea" id="RHEA:23476"/>
        <dbReference type="ChEBI" id="CHEBI:15377"/>
        <dbReference type="ChEBI" id="CHEBI:15378"/>
        <dbReference type="ChEBI" id="CHEBI:16526"/>
        <dbReference type="ChEBI" id="CHEBI:58613"/>
        <dbReference type="ChEBI" id="CHEBI:58866"/>
        <dbReference type="EC" id="4.1.1.48"/>
    </reaction>
</comment>
<comment type="pathway">
    <text>Amino-acid biosynthesis; L-tryptophan biosynthesis; L-tryptophan from chorismate: step 3/5.</text>
</comment>
<comment type="pathway">
    <text>Amino-acid biosynthesis; L-tryptophan biosynthesis; L-tryptophan from chorismate: step 4/5.</text>
</comment>
<comment type="similarity">
    <text evidence="2">In the N-terminal section; belongs to the TrpC family.</text>
</comment>
<comment type="similarity">
    <text evidence="2">In the C-terminal section; belongs to the TrpF family.</text>
</comment>
<dbReference type="EC" id="4.1.1.48"/>
<dbReference type="EC" id="5.3.1.24"/>
<dbReference type="EMBL" id="U09185">
    <property type="protein sequence ID" value="AAA92795.1"/>
    <property type="molecule type" value="Genomic_DNA"/>
</dbReference>
<dbReference type="SMR" id="Q44603"/>
<dbReference type="STRING" id="118110.XW81_01310"/>
<dbReference type="UniPathway" id="UPA00035">
    <property type="reaction ID" value="UER00042"/>
</dbReference>
<dbReference type="UniPathway" id="UPA00035">
    <property type="reaction ID" value="UER00043"/>
</dbReference>
<dbReference type="GO" id="GO:0004425">
    <property type="term" value="F:indole-3-glycerol-phosphate synthase activity"/>
    <property type="evidence" value="ECO:0007669"/>
    <property type="project" value="UniProtKB-UniRule"/>
</dbReference>
<dbReference type="GO" id="GO:0004640">
    <property type="term" value="F:phosphoribosylanthranilate isomerase activity"/>
    <property type="evidence" value="ECO:0007669"/>
    <property type="project" value="UniProtKB-UniRule"/>
</dbReference>
<dbReference type="GO" id="GO:0000162">
    <property type="term" value="P:L-tryptophan biosynthetic process"/>
    <property type="evidence" value="ECO:0007669"/>
    <property type="project" value="UniProtKB-UniRule"/>
</dbReference>
<dbReference type="CDD" id="cd00331">
    <property type="entry name" value="IGPS"/>
    <property type="match status" value="1"/>
</dbReference>
<dbReference type="CDD" id="cd00405">
    <property type="entry name" value="PRAI"/>
    <property type="match status" value="1"/>
</dbReference>
<dbReference type="FunFam" id="3.20.20.70:FF:000024">
    <property type="entry name" value="Indole-3-glycerol phosphate synthase"/>
    <property type="match status" value="1"/>
</dbReference>
<dbReference type="Gene3D" id="3.20.20.70">
    <property type="entry name" value="Aldolase class I"/>
    <property type="match status" value="2"/>
</dbReference>
<dbReference type="HAMAP" id="MF_00134_B">
    <property type="entry name" value="IGPS_B"/>
    <property type="match status" value="1"/>
</dbReference>
<dbReference type="HAMAP" id="MF_00135">
    <property type="entry name" value="PRAI"/>
    <property type="match status" value="1"/>
</dbReference>
<dbReference type="InterPro" id="IPR013785">
    <property type="entry name" value="Aldolase_TIM"/>
</dbReference>
<dbReference type="InterPro" id="IPR045186">
    <property type="entry name" value="Indole-3-glycerol_P_synth"/>
</dbReference>
<dbReference type="InterPro" id="IPR013798">
    <property type="entry name" value="Indole-3-glycerol_P_synth_dom"/>
</dbReference>
<dbReference type="InterPro" id="IPR001468">
    <property type="entry name" value="Indole-3-GlycerolPSynthase_CS"/>
</dbReference>
<dbReference type="InterPro" id="IPR001240">
    <property type="entry name" value="PRAI_dom"/>
</dbReference>
<dbReference type="InterPro" id="IPR011060">
    <property type="entry name" value="RibuloseP-bd_barrel"/>
</dbReference>
<dbReference type="NCBIfam" id="NF006945">
    <property type="entry name" value="PRK09427.1"/>
    <property type="match status" value="1"/>
</dbReference>
<dbReference type="PANTHER" id="PTHR22854:SF2">
    <property type="entry name" value="INDOLE-3-GLYCEROL-PHOSPHATE SYNTHASE"/>
    <property type="match status" value="1"/>
</dbReference>
<dbReference type="PANTHER" id="PTHR22854">
    <property type="entry name" value="TRYPTOPHAN BIOSYNTHESIS PROTEIN"/>
    <property type="match status" value="1"/>
</dbReference>
<dbReference type="Pfam" id="PF00218">
    <property type="entry name" value="IGPS"/>
    <property type="match status" value="1"/>
</dbReference>
<dbReference type="Pfam" id="PF00697">
    <property type="entry name" value="PRAI"/>
    <property type="match status" value="1"/>
</dbReference>
<dbReference type="SUPFAM" id="SSF51366">
    <property type="entry name" value="Ribulose-phoshate binding barrel"/>
    <property type="match status" value="2"/>
</dbReference>
<dbReference type="PROSITE" id="PS00614">
    <property type="entry name" value="IGPS"/>
    <property type="match status" value="1"/>
</dbReference>
<gene>
    <name type="primary">trpC</name>
    <name type="synonym">trpC/F</name>
</gene>
<sequence length="461" mass="52784">MVLENILEKIVKSKINWIKHRKKIQPLSSFQHNITLSDRNFIQALKNIHPALILEFKKHSPSLGILNDFNPEFVAKIYKKYASAISVLTDEKYFHGKFEFIPIIRNIAVQQPILCKDFFIDPYQIYLARYYQADSILLMLSILKDNQYRALEKLAYSLNMAVLTEINNKMELDRAINLNAKIIGINNRNLKNFSISTSNTYKLASKISKNTIVISESGINSYNQLRKFKNLVQGFLIGSALMSKKDLEHAVHKIITGNNKICGLTRVEDARMSKDFGAIYGGFIFCKSSKRYVNLKKAMNITKNVHMKYIGVFCNENISTISYIIDKIPLYAIQLHGNENQFYIDCLKKKIPKCVRVWKAISLNGEKKHANNLFDNVNKHVFDNIHGGSGTPFNWYLLKNYNLKNVILAGGLNIKNCISASDLGCFGLDFNSGIEISPGLKDKKKTFLIFRSLREHKTIIH</sequence>
<reference key="1">
    <citation type="journal article" date="1995" name="Insect Mol. Biol.">
        <title>Genetics of the tryptophan biosynthetic pathway of the prokaryotic endosymbiont (Buchnera) of the aphid Schlechtendalia chinensis.</title>
        <authorList>
            <person name="Lai C.-Y."/>
            <person name="Baumann P."/>
            <person name="Moran N.A."/>
        </authorList>
    </citation>
    <scope>NUCLEOTIDE SEQUENCE [GENOMIC DNA]</scope>
</reference>
<organism>
    <name type="scientific">Buchnera aphidicola subsp. Schlechtendalia chinensis</name>
    <dbReference type="NCBI Taxonomy" id="118110"/>
    <lineage>
        <taxon>Bacteria</taxon>
        <taxon>Pseudomonadati</taxon>
        <taxon>Pseudomonadota</taxon>
        <taxon>Gammaproteobacteria</taxon>
        <taxon>Enterobacterales</taxon>
        <taxon>Erwiniaceae</taxon>
        <taxon>Buchnera</taxon>
    </lineage>
</organism>
<accession>Q44603</accession>